<reference evidence="4 5" key="1">
    <citation type="journal article" date="2010" name="BMC Genomics">
        <title>Transcriptome and proteome analysis of Pinctada margaritifera calcifying mantle and shell: focus on biomineralization.</title>
        <authorList>
            <person name="Joubert C."/>
            <person name="Piquemal D."/>
            <person name="Marie B."/>
            <person name="Manchon L."/>
            <person name="Pierrat F."/>
            <person name="Zanella-Cleon I."/>
            <person name="Cochennec-Laureau N."/>
            <person name="Gueguen Y."/>
            <person name="Montagnani C."/>
        </authorList>
    </citation>
    <scope>NUCLEOTIDE SEQUENCE [MRNA]</scope>
    <scope>IDENTIFICATION</scope>
    <source>
        <tissue evidence="5">Mantle</tissue>
    </source>
</reference>
<reference key="2">
    <citation type="journal article" date="2012" name="Proc. Natl. Acad. Sci. U.S.A.">
        <title>Different secretory repertoires control the biomineralization processes of prism and nacre deposition of the pearl oyster shell.</title>
        <authorList>
            <person name="Marie B."/>
            <person name="Joubert C."/>
            <person name="Tayale A."/>
            <person name="Zanella-Cleon I."/>
            <person name="Belliard C."/>
            <person name="Piquemal D."/>
            <person name="Cochennec-Laureau N."/>
            <person name="Marin F."/>
            <person name="Gueguen Y."/>
            <person name="Montagnani C."/>
        </authorList>
    </citation>
    <scope>PROTEIN SEQUENCE OF 46-53 AND 107-117</scope>
    <scope>SUBCELLULAR LOCATION</scope>
    <scope>TISSUE SPECIFICITY</scope>
    <source>
        <tissue>Shell</tissue>
    </source>
</reference>
<organism>
    <name type="scientific">Margaritifera margaritifera</name>
    <name type="common">Freshwater pearl mussel</name>
    <dbReference type="NCBI Taxonomy" id="102329"/>
    <lineage>
        <taxon>Eukaryota</taxon>
        <taxon>Metazoa</taxon>
        <taxon>Spiralia</taxon>
        <taxon>Lophotrochozoa</taxon>
        <taxon>Mollusca</taxon>
        <taxon>Bivalvia</taxon>
        <taxon>Autobranchia</taxon>
        <taxon>Pteriomorphia</taxon>
        <taxon>Pterioida</taxon>
        <taxon>Pterioidea</taxon>
        <taxon>Pteriidae</taxon>
        <taxon>Pinctada</taxon>
    </lineage>
</organism>
<keyword id="KW-0903">Direct protein sequencing</keyword>
<keyword id="KW-0677">Repeat</keyword>
<keyword id="KW-0964">Secreted</keyword>
<keyword id="KW-0732">Signal</keyword>
<sequence length="182" mass="20824">MIRLYIQCLILWIIILPLLAAREGFGGRCLKPKDKGNRSCGRSQKYYYFNAEKGRCYRFTYYGCKGNSNRFKKKSDCVSSCACQAVLDHGSHCKSKAKRKEGSKVRYYFDSESGLCRKFWYVGCGGNHNKFTSKTSCKKVCVKDAPKRSKSSKPTSKTFSKNAQYSMNSLLRMLKNLSKKVM</sequence>
<dbReference type="EMBL" id="HE610407">
    <property type="protein sequence ID" value="CCE46181.1"/>
    <property type="molecule type" value="mRNA"/>
</dbReference>
<dbReference type="SMR" id="H2A0P0"/>
<dbReference type="GO" id="GO:0005615">
    <property type="term" value="C:extracellular space"/>
    <property type="evidence" value="ECO:0007669"/>
    <property type="project" value="TreeGrafter"/>
</dbReference>
<dbReference type="GO" id="GO:0004867">
    <property type="term" value="F:serine-type endopeptidase inhibitor activity"/>
    <property type="evidence" value="ECO:0007669"/>
    <property type="project" value="InterPro"/>
</dbReference>
<dbReference type="CDD" id="cd00109">
    <property type="entry name" value="Kunitz-type"/>
    <property type="match status" value="1"/>
</dbReference>
<dbReference type="Gene3D" id="4.10.410.10">
    <property type="entry name" value="Pancreatic trypsin inhibitor Kunitz domain"/>
    <property type="match status" value="2"/>
</dbReference>
<dbReference type="InterPro" id="IPR002223">
    <property type="entry name" value="Kunitz_BPTI"/>
</dbReference>
<dbReference type="InterPro" id="IPR036880">
    <property type="entry name" value="Kunitz_BPTI_sf"/>
</dbReference>
<dbReference type="InterPro" id="IPR020901">
    <property type="entry name" value="Prtase_inh_Kunz-CS"/>
</dbReference>
<dbReference type="InterPro" id="IPR050098">
    <property type="entry name" value="TFPI/VKTCI-like"/>
</dbReference>
<dbReference type="PANTHER" id="PTHR10083:SF375">
    <property type="entry name" value="BPTI_KUNITZ INHIBITOR DOMAIN-CONTAINING PROTEIN"/>
    <property type="match status" value="1"/>
</dbReference>
<dbReference type="PANTHER" id="PTHR10083">
    <property type="entry name" value="KUNITZ-TYPE PROTEASE INHIBITOR-RELATED"/>
    <property type="match status" value="1"/>
</dbReference>
<dbReference type="Pfam" id="PF00014">
    <property type="entry name" value="Kunitz_BPTI"/>
    <property type="match status" value="2"/>
</dbReference>
<dbReference type="SMART" id="SM00131">
    <property type="entry name" value="KU"/>
    <property type="match status" value="2"/>
</dbReference>
<dbReference type="SUPFAM" id="SSF57362">
    <property type="entry name" value="BPTI-like"/>
    <property type="match status" value="2"/>
</dbReference>
<dbReference type="PROSITE" id="PS00280">
    <property type="entry name" value="BPTI_KUNITZ_1"/>
    <property type="match status" value="2"/>
</dbReference>
<dbReference type="PROSITE" id="PS50279">
    <property type="entry name" value="BPTI_KUNITZ_2"/>
    <property type="match status" value="2"/>
</dbReference>
<name>KCP5_PINMG</name>
<accession>H2A0P0</accession>
<feature type="signal peptide" evidence="1">
    <location>
        <begin position="1"/>
        <end position="20"/>
    </location>
</feature>
<feature type="chain" id="PRO_0000417941" description="BPTI/Kunitz domain-containing protein 5" evidence="1">
    <location>
        <begin position="21"/>
        <end position="182"/>
    </location>
</feature>
<feature type="domain" description="BPTI/Kunitz inhibitor 1" evidence="2">
    <location>
        <begin position="29"/>
        <end position="81"/>
    </location>
</feature>
<feature type="domain" description="BPTI/Kunitz inhibitor 2" evidence="2">
    <location>
        <begin position="83"/>
        <end position="141"/>
    </location>
</feature>
<protein>
    <recommendedName>
        <fullName>BPTI/Kunitz domain-containing protein 5</fullName>
    </recommendedName>
    <alternativeName>
        <fullName>Nacre serine protease inhibitor 5</fullName>
    </alternativeName>
</protein>
<proteinExistence type="evidence at protein level"/>
<evidence type="ECO:0000255" key="1"/>
<evidence type="ECO:0000255" key="2">
    <source>
        <dbReference type="PROSITE-ProRule" id="PRU00031"/>
    </source>
</evidence>
<evidence type="ECO:0000269" key="3">
    <source>
    </source>
</evidence>
<evidence type="ECO:0000305" key="4"/>
<evidence type="ECO:0000312" key="5">
    <source>
        <dbReference type="EMBL" id="CCE46181.1"/>
    </source>
</evidence>
<comment type="subcellular location">
    <subcellularLocation>
        <location evidence="3">Secreted</location>
    </subcellularLocation>
</comment>
<comment type="tissue specificity">
    <text evidence="3">Nacreous layer of shell (at protein level). Expressed primarily in the mantle with highest level in the mantle pallium and lower level in the mantle edge.</text>
</comment>